<evidence type="ECO:0000255" key="1"/>
<evidence type="ECO:0000255" key="2">
    <source>
        <dbReference type="PROSITE-ProRule" id="PRU00691"/>
    </source>
</evidence>
<evidence type="ECO:0000256" key="3">
    <source>
        <dbReference type="SAM" id="MobiDB-lite"/>
    </source>
</evidence>
<evidence type="ECO:0000269" key="4">
    <source>
    </source>
</evidence>
<evidence type="ECO:0000269" key="5">
    <source>
    </source>
</evidence>
<evidence type="ECO:0000303" key="6">
    <source>
    </source>
</evidence>
<evidence type="ECO:0000303" key="7">
    <source>
    </source>
</evidence>
<evidence type="ECO:0000305" key="8"/>
<evidence type="ECO:0007744" key="9">
    <source>
    </source>
</evidence>
<name>TXD11_HUMAN</name>
<comment type="function">
    <text>May act as a redox regulator involved in DUOX proteins folding. The interaction with DUOX1 and DUOX2 suggest that it belongs to a multiprotein complex constituting the thyroid H(2)O(2) generating system. It is however not sufficient to assist DUOX1 and DUOX2 in H(2)O(2) generation.</text>
</comment>
<comment type="subunit">
    <text evidence="5">Interacts with the cytoplasmic part of DUOX1 and DUOX2. Interacts with TPO and CYBA.</text>
</comment>
<comment type="interaction">
    <interactant intactId="EBI-749812">
        <id>Q6PKC3</id>
    </interactant>
    <interactant intactId="EBI-466029">
        <id>P42858</id>
        <label>HTT</label>
    </interactant>
    <organismsDiffer>false</organismsDiffer>
    <experiments>7</experiments>
</comment>
<comment type="interaction">
    <interactant intactId="EBI-749812">
        <id>Q6PKC3</id>
    </interactant>
    <interactant intactId="EBI-6426443">
        <id>Q2WGJ6</id>
        <label>KLHL38</label>
    </interactant>
    <organismsDiffer>false</organismsDiffer>
    <experiments>3</experiments>
</comment>
<comment type="interaction">
    <interactant intactId="EBI-749812">
        <id>Q6PKC3</id>
    </interactant>
    <interactant intactId="EBI-2340269">
        <id>Q13064</id>
        <label>MKRN3</label>
    </interactant>
    <organismsDiffer>false</organismsDiffer>
    <experiments>3</experiments>
</comment>
<comment type="interaction">
    <interactant intactId="EBI-749812">
        <id>Q6PKC3</id>
    </interactant>
    <interactant intactId="EBI-2798416">
        <id>Q99633</id>
        <label>PRPF18</label>
    </interactant>
    <organismsDiffer>false</organismsDiffer>
    <experiments>3</experiments>
</comment>
<comment type="interaction">
    <interactant intactId="EBI-749812">
        <id>Q6PKC3</id>
    </interactant>
    <interactant intactId="EBI-5542466">
        <id>Q8WUD1</id>
        <label>RAB2B</label>
    </interactant>
    <organismsDiffer>false</organismsDiffer>
    <experiments>3</experiments>
</comment>
<comment type="interaction">
    <interactant intactId="EBI-749812">
        <id>Q6PKC3</id>
    </interactant>
    <interactant intactId="EBI-740727">
        <id>Q8TAU3</id>
        <label>ZNF417</label>
    </interactant>
    <organismsDiffer>false</organismsDiffer>
    <experiments>3</experiments>
</comment>
<comment type="interaction">
    <interactant intactId="EBI-749812">
        <id>Q6PKC3</id>
    </interactant>
    <interactant intactId="EBI-6863748">
        <id>PRO_0000037551</id>
        <dbReference type="UniProtKB" id="Q9WMX2"/>
    </interactant>
    <organismsDiffer>true</organismsDiffer>
    <experiments>2</experiments>
</comment>
<comment type="subcellular location">
    <subcellularLocation>
        <location evidence="8">Endoplasmic reticulum membrane</location>
        <topology evidence="8">Single-pass membrane protein</topology>
    </subcellularLocation>
</comment>
<comment type="alternative products">
    <event type="alternative splicing"/>
    <isoform>
        <id>Q6PKC3-1</id>
        <name>1</name>
        <sequence type="displayed"/>
    </isoform>
    <isoform>
        <id>Q6PKC3-2</id>
        <name>2</name>
        <sequence type="described" ref="VSP_014335"/>
    </isoform>
    <isoform>
        <id>Q6PKC3-3</id>
        <name>3</name>
        <sequence type="described" ref="VSP_014336 VSP_014337"/>
    </isoform>
</comment>
<comment type="tissue specificity">
    <text evidence="5">Widely expressed at low level. Expressed at higher level in thyroid and prostate.</text>
</comment>
<comment type="similarity">
    <text evidence="8">Belongs to the protein disulfide isomerase family.</text>
</comment>
<comment type="sequence caution" evidence="8">
    <conflict type="frameshift">
        <sequence resource="EMBL-CDS" id="AAD20043"/>
    </conflict>
</comment>
<comment type="sequence caution" evidence="8">
    <conflict type="erroneous initiation">
        <sequence resource="EMBL-CDS" id="AAH13727"/>
    </conflict>
</comment>
<comment type="sequence caution" evidence="8">
    <conflict type="erroneous initiation">
        <sequence resource="EMBL-CDS" id="BAB55129"/>
    </conflict>
</comment>
<comment type="sequence caution" evidence="8">
    <conflict type="miscellaneous discrepancy">
        <sequence resource="EMBL-CDS" id="BAC11044"/>
    </conflict>
    <text>Intron retention.</text>
</comment>
<sequence length="985" mass="110529">MSECGGRGGGSSSSEDAEDEGGGGGGPAGSDCLSSSPTLATASSAGRLRRGLRGAFLMARQRPELLCGAVALGCALLLALKFTCSRAKDVIIPAKPPVSFFSLRSPVLDLFQGQLDYAEYVRRDSEVVLLFFYAPWCGQSIAARAEIEQAASRLSDQVLFVAINCWWNQGKCRKQKHFFYFPVIYLYHRSFGPIEYKGPMSAVYIEKFVRRVMKPLLYIPSQSELLDFLSNYEPGVLGYFEFSGSPQPPGYLTFFTSALHSLKKALESTSSPRALVSFTGEWHLETKIYVLDYLGTVRFGVITNKHLAKLVSLVHSGSVYLHRHFNTSLVFPREVLNYTAENICKWALENQETLFRWLRPHGGKSLLLNNELKKGPALFLFIPFNPLAESHPLIDEITEVALEYNNCHGDQVVERLLQHLRRVDAPVLESLALEVPAQLPDPPTITASPCCNTVVLPQWHSFSRTHNVCELCVNQTSGGMKPSSVSVPQCSFFEMAAALDSFYLKEQTFYHVASDSIECSNFLTSYSPFSYYTACCRTISRGVSGFIDSEQGVFEAPTVAFSSLEKKCEVDAPSSVPHIEENRYLFPEVDMTSTNFTGLSCRTNKTLNIYLLDSNLFWLYAERLGAPSSTQVKEFAAIVDVKEESHYILDPKQALMKLTLESFIQNFSVLYSPLKRHLIGSGSAQFPSQHLITEVTTDTFWEVVLQKQDVLLLYYAPWCGFCPSLNHIFIQLARNLPMDTFTVARIDVSQNDLPWEFMVDRLPTVLFFPCNRKDLSVKYPEDVPITLPNLLRFILHHSDPASSPQNVANSPTKECLQSEAVLQRGHISHLEREIQKLRAEISSLQRAQVQVESQLSSARRDEHRLRQQQRALEEQHSLLHAHSEQLQALYEQKTRELQELARKLQELADASENLLTENTWLKILVATMERKLEGRDGAESLAAQREVHPKQPEPSATPQLPGSSPPPANVSATLVSERNKENRTD</sequence>
<organism>
    <name type="scientific">Homo sapiens</name>
    <name type="common">Human</name>
    <dbReference type="NCBI Taxonomy" id="9606"/>
    <lineage>
        <taxon>Eukaryota</taxon>
        <taxon>Metazoa</taxon>
        <taxon>Chordata</taxon>
        <taxon>Craniata</taxon>
        <taxon>Vertebrata</taxon>
        <taxon>Euteleostomi</taxon>
        <taxon>Mammalia</taxon>
        <taxon>Eutheria</taxon>
        <taxon>Euarchontoglires</taxon>
        <taxon>Primates</taxon>
        <taxon>Haplorrhini</taxon>
        <taxon>Catarrhini</taxon>
        <taxon>Hominidae</taxon>
        <taxon>Homo</taxon>
    </lineage>
</organism>
<proteinExistence type="evidence at protein level"/>
<dbReference type="EMBL" id="AK027464">
    <property type="protein sequence ID" value="BAB55129.1"/>
    <property type="status" value="ALT_INIT"/>
    <property type="molecule type" value="mRNA"/>
</dbReference>
<dbReference type="EMBL" id="AK027646">
    <property type="protein sequence ID" value="BAB55262.1"/>
    <property type="molecule type" value="mRNA"/>
</dbReference>
<dbReference type="EMBL" id="AK074534">
    <property type="protein sequence ID" value="BAC11044.1"/>
    <property type="status" value="ALT_SEQ"/>
    <property type="molecule type" value="mRNA"/>
</dbReference>
<dbReference type="EMBL" id="BC002856">
    <property type="protein sequence ID" value="AAH02856.1"/>
    <property type="molecule type" value="mRNA"/>
</dbReference>
<dbReference type="EMBL" id="BC013727">
    <property type="protein sequence ID" value="AAH13727.1"/>
    <property type="status" value="ALT_INIT"/>
    <property type="molecule type" value="mRNA"/>
</dbReference>
<dbReference type="EMBL" id="BC018635">
    <property type="protein sequence ID" value="AAH18635.1"/>
    <property type="molecule type" value="mRNA"/>
</dbReference>
<dbReference type="EMBL" id="AF131780">
    <property type="protein sequence ID" value="AAD20043.1"/>
    <property type="status" value="ALT_FRAME"/>
    <property type="molecule type" value="mRNA"/>
</dbReference>
<dbReference type="EMBL" id="CR457152">
    <property type="protein sequence ID" value="CAG33433.1"/>
    <property type="molecule type" value="mRNA"/>
</dbReference>
<dbReference type="CCDS" id="CCDS32387.1">
    <molecule id="Q6PKC3-2"/>
</dbReference>
<dbReference type="CCDS" id="CCDS76822.1">
    <molecule id="Q6PKC3-1"/>
</dbReference>
<dbReference type="RefSeq" id="NP_001290376.1">
    <molecule id="Q6PKC3-1"/>
    <property type="nucleotide sequence ID" value="NM_001303447.2"/>
</dbReference>
<dbReference type="RefSeq" id="NP_001310953.1">
    <property type="nucleotide sequence ID" value="NM_001324024.1"/>
</dbReference>
<dbReference type="RefSeq" id="NP_001310954.1">
    <property type="nucleotide sequence ID" value="NM_001324025.1"/>
</dbReference>
<dbReference type="RefSeq" id="NP_056998.4">
    <molecule id="Q6PKC3-2"/>
    <property type="nucleotide sequence ID" value="NM_015914.6"/>
</dbReference>
<dbReference type="BioGRID" id="119253">
    <property type="interactions" value="119"/>
</dbReference>
<dbReference type="CORUM" id="Q6PKC3"/>
<dbReference type="FunCoup" id="Q6PKC3">
    <property type="interactions" value="1620"/>
</dbReference>
<dbReference type="IntAct" id="Q6PKC3">
    <property type="interactions" value="113"/>
</dbReference>
<dbReference type="MINT" id="Q6PKC3"/>
<dbReference type="STRING" id="9606.ENSP00000349439"/>
<dbReference type="ChEMBL" id="CHEMBL4630840"/>
<dbReference type="GlyConnect" id="1800">
    <property type="glycosylation" value="1 N-Linked glycan (1 site)"/>
</dbReference>
<dbReference type="GlyCosmos" id="Q6PKC3">
    <property type="glycosylation" value="2 sites, 2 glycans"/>
</dbReference>
<dbReference type="GlyGen" id="Q6PKC3">
    <property type="glycosylation" value="8 sites, 12 N-linked glycans (5 sites), 2 O-linked glycans (3 sites)"/>
</dbReference>
<dbReference type="iPTMnet" id="Q6PKC3"/>
<dbReference type="PhosphoSitePlus" id="Q6PKC3"/>
<dbReference type="BioMuta" id="TXNDC11"/>
<dbReference type="DMDM" id="68566185"/>
<dbReference type="jPOST" id="Q6PKC3"/>
<dbReference type="MassIVE" id="Q6PKC3"/>
<dbReference type="PaxDb" id="9606-ENSP00000283033"/>
<dbReference type="PeptideAtlas" id="Q6PKC3"/>
<dbReference type="ProteomicsDB" id="67239">
    <molecule id="Q6PKC3-1"/>
</dbReference>
<dbReference type="ProteomicsDB" id="67240">
    <molecule id="Q6PKC3-2"/>
</dbReference>
<dbReference type="ProteomicsDB" id="67241">
    <molecule id="Q6PKC3-3"/>
</dbReference>
<dbReference type="Pumba" id="Q6PKC3"/>
<dbReference type="Antibodypedia" id="49688">
    <property type="antibodies" value="115 antibodies from 24 providers"/>
</dbReference>
<dbReference type="DNASU" id="51061"/>
<dbReference type="Ensembl" id="ENST00000283033.10">
    <molecule id="Q6PKC3-2"/>
    <property type="protein sequence ID" value="ENSP00000283033.5"/>
    <property type="gene ID" value="ENSG00000153066.13"/>
</dbReference>
<dbReference type="Ensembl" id="ENST00000356957.7">
    <molecule id="Q6PKC3-1"/>
    <property type="protein sequence ID" value="ENSP00000349439.3"/>
    <property type="gene ID" value="ENSG00000153066.13"/>
</dbReference>
<dbReference type="GeneID" id="51061"/>
<dbReference type="KEGG" id="hsa:51061"/>
<dbReference type="MANE-Select" id="ENST00000283033.10">
    <molecule id="Q6PKC3-2"/>
    <property type="protein sequence ID" value="ENSP00000283033.5"/>
    <property type="RefSeq nucleotide sequence ID" value="NM_015914.7"/>
    <property type="RefSeq protein sequence ID" value="NP_056998.4"/>
</dbReference>
<dbReference type="UCSC" id="uc002dbg.2">
    <molecule id="Q6PKC3-1"/>
    <property type="organism name" value="human"/>
</dbReference>
<dbReference type="AGR" id="HGNC:28030"/>
<dbReference type="CTD" id="51061"/>
<dbReference type="DisGeNET" id="51061"/>
<dbReference type="GeneCards" id="TXNDC11"/>
<dbReference type="HGNC" id="HGNC:28030">
    <property type="gene designation" value="TXNDC11"/>
</dbReference>
<dbReference type="HPA" id="ENSG00000153066">
    <property type="expression patterns" value="Low tissue specificity"/>
</dbReference>
<dbReference type="MIM" id="617792">
    <property type="type" value="gene"/>
</dbReference>
<dbReference type="neXtProt" id="NX_Q6PKC3"/>
<dbReference type="OpenTargets" id="ENSG00000153066"/>
<dbReference type="PharmGKB" id="PA134915251"/>
<dbReference type="VEuPathDB" id="HostDB:ENSG00000153066"/>
<dbReference type="eggNOG" id="KOG0190">
    <property type="taxonomic scope" value="Eukaryota"/>
</dbReference>
<dbReference type="GeneTree" id="ENSGT00390000016020"/>
<dbReference type="HOGENOM" id="CLU_010764_1_0_1"/>
<dbReference type="InParanoid" id="Q6PKC3"/>
<dbReference type="OMA" id="VIYLYHQ"/>
<dbReference type="OrthoDB" id="1910803at2759"/>
<dbReference type="PAN-GO" id="Q6PKC3">
    <property type="GO annotations" value="0 GO annotations based on evolutionary models"/>
</dbReference>
<dbReference type="PhylomeDB" id="Q6PKC3"/>
<dbReference type="TreeFam" id="TF323602"/>
<dbReference type="PathwayCommons" id="Q6PKC3"/>
<dbReference type="SignaLink" id="Q6PKC3"/>
<dbReference type="BioGRID-ORCS" id="51061">
    <property type="hits" value="10 hits in 1156 CRISPR screens"/>
</dbReference>
<dbReference type="ChiTaRS" id="TXNDC11">
    <property type="organism name" value="human"/>
</dbReference>
<dbReference type="GenomeRNAi" id="51061"/>
<dbReference type="Pharos" id="Q6PKC3">
    <property type="development level" value="Tbio"/>
</dbReference>
<dbReference type="PRO" id="PR:Q6PKC3"/>
<dbReference type="Proteomes" id="UP000005640">
    <property type="component" value="Chromosome 16"/>
</dbReference>
<dbReference type="RNAct" id="Q6PKC3">
    <property type="molecule type" value="protein"/>
</dbReference>
<dbReference type="Bgee" id="ENSG00000153066">
    <property type="expression patterns" value="Expressed in bone marrow cell and 178 other cell types or tissues"/>
</dbReference>
<dbReference type="ExpressionAtlas" id="Q6PKC3">
    <property type="expression patterns" value="baseline and differential"/>
</dbReference>
<dbReference type="GO" id="GO:0005789">
    <property type="term" value="C:endoplasmic reticulum membrane"/>
    <property type="evidence" value="ECO:0007669"/>
    <property type="project" value="UniProtKB-SubCell"/>
</dbReference>
<dbReference type="CDD" id="cd03006">
    <property type="entry name" value="PDI_a_EFP1_N"/>
    <property type="match status" value="1"/>
</dbReference>
<dbReference type="CDD" id="cd02995">
    <property type="entry name" value="PDI_a_PDI_a'_C"/>
    <property type="match status" value="1"/>
</dbReference>
<dbReference type="Gene3D" id="3.40.30.10">
    <property type="entry name" value="Glutaredoxin"/>
    <property type="match status" value="2"/>
</dbReference>
<dbReference type="InterPro" id="IPR036249">
    <property type="entry name" value="Thioredoxin-like_sf"/>
</dbReference>
<dbReference type="InterPro" id="IPR052792">
    <property type="entry name" value="Thioredoxin_dom-contain_11"/>
</dbReference>
<dbReference type="InterPro" id="IPR013766">
    <property type="entry name" value="Thioredoxin_domain"/>
</dbReference>
<dbReference type="PANTHER" id="PTHR46497">
    <property type="entry name" value="THIOREDOXIN DOMAIN-CONTAINING PROTEIN 11"/>
    <property type="match status" value="1"/>
</dbReference>
<dbReference type="PANTHER" id="PTHR46497:SF1">
    <property type="entry name" value="THIOREDOXIN DOMAIN-CONTAINING PROTEIN 11"/>
    <property type="match status" value="1"/>
</dbReference>
<dbReference type="Pfam" id="PF00085">
    <property type="entry name" value="Thioredoxin"/>
    <property type="match status" value="2"/>
</dbReference>
<dbReference type="SUPFAM" id="SSF52833">
    <property type="entry name" value="Thioredoxin-like"/>
    <property type="match status" value="2"/>
</dbReference>
<dbReference type="PROSITE" id="PS51352">
    <property type="entry name" value="THIOREDOXIN_2"/>
    <property type="match status" value="2"/>
</dbReference>
<keyword id="KW-0025">Alternative splicing</keyword>
<keyword id="KW-0175">Coiled coil</keyword>
<keyword id="KW-1015">Disulfide bond</keyword>
<keyword id="KW-0256">Endoplasmic reticulum</keyword>
<keyword id="KW-0472">Membrane</keyword>
<keyword id="KW-0597">Phosphoprotein</keyword>
<keyword id="KW-1267">Proteomics identification</keyword>
<keyword id="KW-0676">Redox-active center</keyword>
<keyword id="KW-1185">Reference proteome</keyword>
<keyword id="KW-0677">Repeat</keyword>
<keyword id="KW-0812">Transmembrane</keyword>
<keyword id="KW-1133">Transmembrane helix</keyword>
<feature type="chain" id="PRO_0000120173" description="Thioredoxin domain-containing protein 11">
    <location>
        <begin position="1"/>
        <end position="985"/>
    </location>
</feature>
<feature type="transmembrane region" description="Helical" evidence="1">
    <location>
        <begin position="65"/>
        <end position="85"/>
    </location>
</feature>
<feature type="domain" description="Thioredoxin 1" evidence="2">
    <location>
        <begin position="92"/>
        <end position="214"/>
    </location>
</feature>
<feature type="domain" description="Thioredoxin 2" evidence="2">
    <location>
        <begin position="649"/>
        <end position="799"/>
    </location>
</feature>
<feature type="region of interest" description="Disordered" evidence="3">
    <location>
        <begin position="1"/>
        <end position="38"/>
    </location>
</feature>
<feature type="region of interest" description="Disordered" evidence="3">
    <location>
        <begin position="935"/>
        <end position="985"/>
    </location>
</feature>
<feature type="coiled-coil region" evidence="1">
    <location>
        <begin position="821"/>
        <end position="919"/>
    </location>
</feature>
<feature type="compositionally biased region" description="Gly residues" evidence="3">
    <location>
        <begin position="1"/>
        <end position="11"/>
    </location>
</feature>
<feature type="compositionally biased region" description="Low complexity" evidence="3">
    <location>
        <begin position="29"/>
        <end position="38"/>
    </location>
</feature>
<feature type="modified residue" description="Phosphoserine" evidence="9">
    <location>
        <position position="828"/>
    </location>
</feature>
<feature type="disulfide bond" description="Redox-active" evidence="2">
    <location>
        <begin position="469"/>
        <end position="472"/>
    </location>
</feature>
<feature type="disulfide bond" description="Redox-active" evidence="2">
    <location>
        <begin position="719"/>
        <end position="722"/>
    </location>
</feature>
<feature type="splice variant" id="VSP_014335" description="In isoform 2." evidence="6">
    <location>
        <begin position="265"/>
        <end position="291"/>
    </location>
</feature>
<feature type="splice variant" id="VSP_014336" description="In isoform 3." evidence="7">
    <original>ALESTSSPRALVSF</original>
    <variation>DGVSPCRPGWSAVA</variation>
    <location>
        <begin position="265"/>
        <end position="278"/>
    </location>
</feature>
<feature type="splice variant" id="VSP_014337" description="In isoform 3." evidence="7">
    <location>
        <begin position="279"/>
        <end position="985"/>
    </location>
</feature>
<feature type="sequence variant" id="VAR_022767" description="In dbSNP:rs3190321." evidence="4">
    <original>V</original>
    <variation>L</variation>
    <location>
        <position position="783"/>
    </location>
</feature>
<reference key="1">
    <citation type="journal article" date="2004" name="Nat. Genet.">
        <title>Complete sequencing and characterization of 21,243 full-length human cDNAs.</title>
        <authorList>
            <person name="Ota T."/>
            <person name="Suzuki Y."/>
            <person name="Nishikawa T."/>
            <person name="Otsuki T."/>
            <person name="Sugiyama T."/>
            <person name="Irie R."/>
            <person name="Wakamatsu A."/>
            <person name="Hayashi K."/>
            <person name="Sato H."/>
            <person name="Nagai K."/>
            <person name="Kimura K."/>
            <person name="Makita H."/>
            <person name="Sekine M."/>
            <person name="Obayashi M."/>
            <person name="Nishi T."/>
            <person name="Shibahara T."/>
            <person name="Tanaka T."/>
            <person name="Ishii S."/>
            <person name="Yamamoto J."/>
            <person name="Saito K."/>
            <person name="Kawai Y."/>
            <person name="Isono Y."/>
            <person name="Nakamura Y."/>
            <person name="Nagahari K."/>
            <person name="Murakami K."/>
            <person name="Yasuda T."/>
            <person name="Iwayanagi T."/>
            <person name="Wagatsuma M."/>
            <person name="Shiratori A."/>
            <person name="Sudo H."/>
            <person name="Hosoiri T."/>
            <person name="Kaku Y."/>
            <person name="Kodaira H."/>
            <person name="Kondo H."/>
            <person name="Sugawara M."/>
            <person name="Takahashi M."/>
            <person name="Kanda K."/>
            <person name="Yokoi T."/>
            <person name="Furuya T."/>
            <person name="Kikkawa E."/>
            <person name="Omura Y."/>
            <person name="Abe K."/>
            <person name="Kamihara K."/>
            <person name="Katsuta N."/>
            <person name="Sato K."/>
            <person name="Tanikawa M."/>
            <person name="Yamazaki M."/>
            <person name="Ninomiya K."/>
            <person name="Ishibashi T."/>
            <person name="Yamashita H."/>
            <person name="Murakawa K."/>
            <person name="Fujimori K."/>
            <person name="Tanai H."/>
            <person name="Kimata M."/>
            <person name="Watanabe M."/>
            <person name="Hiraoka S."/>
            <person name="Chiba Y."/>
            <person name="Ishida S."/>
            <person name="Ono Y."/>
            <person name="Takiguchi S."/>
            <person name="Watanabe S."/>
            <person name="Yosida M."/>
            <person name="Hotuta T."/>
            <person name="Kusano J."/>
            <person name="Kanehori K."/>
            <person name="Takahashi-Fujii A."/>
            <person name="Hara H."/>
            <person name="Tanase T.-O."/>
            <person name="Nomura Y."/>
            <person name="Togiya S."/>
            <person name="Komai F."/>
            <person name="Hara R."/>
            <person name="Takeuchi K."/>
            <person name="Arita M."/>
            <person name="Imose N."/>
            <person name="Musashino K."/>
            <person name="Yuuki H."/>
            <person name="Oshima A."/>
            <person name="Sasaki N."/>
            <person name="Aotsuka S."/>
            <person name="Yoshikawa Y."/>
            <person name="Matsunawa H."/>
            <person name="Ichihara T."/>
            <person name="Shiohata N."/>
            <person name="Sano S."/>
            <person name="Moriya S."/>
            <person name="Momiyama H."/>
            <person name="Satoh N."/>
            <person name="Takami S."/>
            <person name="Terashima Y."/>
            <person name="Suzuki O."/>
            <person name="Nakagawa S."/>
            <person name="Senoh A."/>
            <person name="Mizoguchi H."/>
            <person name="Goto Y."/>
            <person name="Shimizu F."/>
            <person name="Wakebe H."/>
            <person name="Hishigaki H."/>
            <person name="Watanabe T."/>
            <person name="Sugiyama A."/>
            <person name="Takemoto M."/>
            <person name="Kawakami B."/>
            <person name="Yamazaki M."/>
            <person name="Watanabe K."/>
            <person name="Kumagai A."/>
            <person name="Itakura S."/>
            <person name="Fukuzumi Y."/>
            <person name="Fujimori Y."/>
            <person name="Komiyama M."/>
            <person name="Tashiro H."/>
            <person name="Tanigami A."/>
            <person name="Fujiwara T."/>
            <person name="Ono T."/>
            <person name="Yamada K."/>
            <person name="Fujii Y."/>
            <person name="Ozaki K."/>
            <person name="Hirao M."/>
            <person name="Ohmori Y."/>
            <person name="Kawabata A."/>
            <person name="Hikiji T."/>
            <person name="Kobatake N."/>
            <person name="Inagaki H."/>
            <person name="Ikema Y."/>
            <person name="Okamoto S."/>
            <person name="Okitani R."/>
            <person name="Kawakami T."/>
            <person name="Noguchi S."/>
            <person name="Itoh T."/>
            <person name="Shigeta K."/>
            <person name="Senba T."/>
            <person name="Matsumura K."/>
            <person name="Nakajima Y."/>
            <person name="Mizuno T."/>
            <person name="Morinaga M."/>
            <person name="Sasaki M."/>
            <person name="Togashi T."/>
            <person name="Oyama M."/>
            <person name="Hata H."/>
            <person name="Watanabe M."/>
            <person name="Komatsu T."/>
            <person name="Mizushima-Sugano J."/>
            <person name="Satoh T."/>
            <person name="Shirai Y."/>
            <person name="Takahashi Y."/>
            <person name="Nakagawa K."/>
            <person name="Okumura K."/>
            <person name="Nagase T."/>
            <person name="Nomura N."/>
            <person name="Kikuchi H."/>
            <person name="Masuho Y."/>
            <person name="Yamashita R."/>
            <person name="Nakai K."/>
            <person name="Yada T."/>
            <person name="Nakamura Y."/>
            <person name="Ohara O."/>
            <person name="Isogai T."/>
            <person name="Sugano S."/>
        </authorList>
    </citation>
    <scope>NUCLEOTIDE SEQUENCE [LARGE SCALE MRNA] (ISOFORM 2)</scope>
    <source>
        <tissue>Embryo</tissue>
        <tissue>Teratocarcinoma</tissue>
    </source>
</reference>
<reference key="2">
    <citation type="journal article" date="2004" name="Genome Res.">
        <title>The status, quality, and expansion of the NIH full-length cDNA project: the Mammalian Gene Collection (MGC).</title>
        <authorList>
            <consortium name="The MGC Project Team"/>
        </authorList>
    </citation>
    <scope>NUCLEOTIDE SEQUENCE [LARGE SCALE MRNA] (ISOFORMS 1 AND 3)</scope>
    <scope>VARIANT LEU-783</scope>
    <source>
        <tissue>Placenta</tissue>
    </source>
</reference>
<reference key="3">
    <citation type="submission" date="1999-02" db="EMBL/GenBank/DDBJ databases">
        <authorList>
            <person name="Mei G."/>
            <person name="Yu W."/>
            <person name="Gibbs R.A."/>
        </authorList>
    </citation>
    <scope>NUCLEOTIDE SEQUENCE [LARGE SCALE MRNA] OF 523-985</scope>
    <source>
        <tissue>Brain</tissue>
    </source>
</reference>
<reference key="4">
    <citation type="submission" date="2004-06" db="EMBL/GenBank/DDBJ databases">
        <title>Cloning of human full open reading frames in Gateway(TM) system entry vector (pDONR201).</title>
        <authorList>
            <person name="Ebert L."/>
            <person name="Schick M."/>
            <person name="Neubert P."/>
            <person name="Schatten R."/>
            <person name="Henze S."/>
            <person name="Korn B."/>
        </authorList>
    </citation>
    <scope>NUCLEOTIDE SEQUENCE [LARGE SCALE MRNA] OF 656-985</scope>
</reference>
<reference key="5">
    <citation type="journal article" date="2005" name="J. Biol. Chem.">
        <title>Identification of a novel partner of duox: EFP1, a thioredoxin-related protein.</title>
        <authorList>
            <person name="Wang D."/>
            <person name="De Deken X."/>
            <person name="Milenkovic M."/>
            <person name="Song Y."/>
            <person name="Pirson I."/>
            <person name="Dumont J.E."/>
            <person name="Miot F."/>
        </authorList>
    </citation>
    <scope>TISSUE SPECIFICITY</scope>
    <scope>INTERACTION WITH DUOX1; DUOX2; TPO AND CYBA</scope>
</reference>
<reference key="6">
    <citation type="journal article" date="2007" name="Mol. Cell. Proteomics">
        <title>Quantitative phosphoproteome profiling of Wnt3a-mediated signaling network: indicating the involvement of ribonucleoside-diphosphate reductase M2 subunit phosphorylation at residue serine 20 in canonical Wnt signal transduction.</title>
        <authorList>
            <person name="Tang L.-Y."/>
            <person name="Deng N."/>
            <person name="Wang L.-S."/>
            <person name="Dai J."/>
            <person name="Wang Z.-L."/>
            <person name="Jiang X.-S."/>
            <person name="Li S.-J."/>
            <person name="Li L."/>
            <person name="Sheng Q.-H."/>
            <person name="Wu D.-Q."/>
            <person name="Li L."/>
            <person name="Zeng R."/>
        </authorList>
    </citation>
    <scope>PHOSPHORYLATION [LARGE SCALE ANALYSIS] AT SER-828</scope>
    <scope>IDENTIFICATION BY MASS SPECTROMETRY [LARGE SCALE ANALYSIS]</scope>
    <source>
        <tissue>Embryonic kidney</tissue>
    </source>
</reference>
<accession>Q6PKC3</accession>
<accession>O95887</accession>
<accession>Q6PJA6</accession>
<accession>Q8N2Q4</accession>
<accession>Q96K45</accession>
<accession>Q96K53</accession>
<protein>
    <recommendedName>
        <fullName>Thioredoxin domain-containing protein 11</fullName>
    </recommendedName>
    <alternativeName>
        <fullName>EF-hand-binding protein 1</fullName>
    </alternativeName>
</protein>
<gene>
    <name type="primary">TXNDC11</name>
    <name type="synonym">EFP1</name>
</gene>